<dbReference type="EC" id="2.7.7.6" evidence="1"/>
<dbReference type="EMBL" id="DQ673255">
    <property type="protein sequence ID" value="ABG74658.1"/>
    <property type="status" value="ALT_FRAME"/>
    <property type="molecule type" value="Genomic_DNA"/>
</dbReference>
<dbReference type="RefSeq" id="YP_778521.1">
    <property type="nucleotide sequence ID" value="NC_008407.1"/>
</dbReference>
<dbReference type="SMR" id="Q06RA0"/>
<dbReference type="GeneID" id="4319786"/>
<dbReference type="GO" id="GO:0009507">
    <property type="term" value="C:chloroplast"/>
    <property type="evidence" value="ECO:0007669"/>
    <property type="project" value="UniProtKB-SubCell"/>
</dbReference>
<dbReference type="GO" id="GO:0000428">
    <property type="term" value="C:DNA-directed RNA polymerase complex"/>
    <property type="evidence" value="ECO:0007669"/>
    <property type="project" value="UniProtKB-KW"/>
</dbReference>
<dbReference type="GO" id="GO:0005739">
    <property type="term" value="C:mitochondrion"/>
    <property type="evidence" value="ECO:0007669"/>
    <property type="project" value="GOC"/>
</dbReference>
<dbReference type="GO" id="GO:0003677">
    <property type="term" value="F:DNA binding"/>
    <property type="evidence" value="ECO:0007669"/>
    <property type="project" value="UniProtKB-UniRule"/>
</dbReference>
<dbReference type="GO" id="GO:0003899">
    <property type="term" value="F:DNA-directed RNA polymerase activity"/>
    <property type="evidence" value="ECO:0007669"/>
    <property type="project" value="UniProtKB-UniRule"/>
</dbReference>
<dbReference type="GO" id="GO:0046983">
    <property type="term" value="F:protein dimerization activity"/>
    <property type="evidence" value="ECO:0007669"/>
    <property type="project" value="InterPro"/>
</dbReference>
<dbReference type="GO" id="GO:0006351">
    <property type="term" value="P:DNA-templated transcription"/>
    <property type="evidence" value="ECO:0007669"/>
    <property type="project" value="UniProtKB-UniRule"/>
</dbReference>
<dbReference type="CDD" id="cd06928">
    <property type="entry name" value="RNAP_alpha_NTD"/>
    <property type="match status" value="1"/>
</dbReference>
<dbReference type="FunFam" id="2.170.120.12:FF:000001">
    <property type="entry name" value="DNA-directed RNA polymerase subunit alpha"/>
    <property type="match status" value="1"/>
</dbReference>
<dbReference type="Gene3D" id="1.10.150.20">
    <property type="entry name" value="5' to 3' exonuclease, C-terminal subdomain"/>
    <property type="match status" value="1"/>
</dbReference>
<dbReference type="Gene3D" id="2.170.120.12">
    <property type="entry name" value="DNA-directed RNA polymerase, insert domain"/>
    <property type="match status" value="1"/>
</dbReference>
<dbReference type="Gene3D" id="3.30.1360.10">
    <property type="entry name" value="RNA polymerase, RBP11-like subunit"/>
    <property type="match status" value="1"/>
</dbReference>
<dbReference type="HAMAP" id="MF_00059">
    <property type="entry name" value="RNApol_bact_RpoA"/>
    <property type="match status" value="1"/>
</dbReference>
<dbReference type="InterPro" id="IPR011262">
    <property type="entry name" value="DNA-dir_RNA_pol_insert"/>
</dbReference>
<dbReference type="InterPro" id="IPR011263">
    <property type="entry name" value="DNA-dir_RNA_pol_RpoA/D/Rpb3"/>
</dbReference>
<dbReference type="InterPro" id="IPR011773">
    <property type="entry name" value="DNA-dir_RpoA"/>
</dbReference>
<dbReference type="InterPro" id="IPR036603">
    <property type="entry name" value="RBP11-like"/>
</dbReference>
<dbReference type="InterPro" id="IPR011260">
    <property type="entry name" value="RNAP_asu_C"/>
</dbReference>
<dbReference type="InterPro" id="IPR036643">
    <property type="entry name" value="RNApol_insert_sf"/>
</dbReference>
<dbReference type="NCBIfam" id="TIGR02027">
    <property type="entry name" value="rpoA"/>
    <property type="match status" value="1"/>
</dbReference>
<dbReference type="Pfam" id="PF01000">
    <property type="entry name" value="RNA_pol_A_bac"/>
    <property type="match status" value="1"/>
</dbReference>
<dbReference type="Pfam" id="PF03118">
    <property type="entry name" value="RNA_pol_A_CTD"/>
    <property type="match status" value="1"/>
</dbReference>
<dbReference type="Pfam" id="PF01193">
    <property type="entry name" value="RNA_pol_L"/>
    <property type="match status" value="1"/>
</dbReference>
<dbReference type="SMART" id="SM00662">
    <property type="entry name" value="RPOLD"/>
    <property type="match status" value="1"/>
</dbReference>
<dbReference type="SUPFAM" id="SSF47789">
    <property type="entry name" value="C-terminal domain of RNA polymerase alpha subunit"/>
    <property type="match status" value="1"/>
</dbReference>
<dbReference type="SUPFAM" id="SSF56553">
    <property type="entry name" value="Insert subdomain of RNA polymerase alpha subunit"/>
    <property type="match status" value="1"/>
</dbReference>
<dbReference type="SUPFAM" id="SSF55257">
    <property type="entry name" value="RBP11-like subunits of RNA polymerase"/>
    <property type="match status" value="1"/>
</dbReference>
<evidence type="ECO:0000255" key="1">
    <source>
        <dbReference type="HAMAP-Rule" id="MF_00059"/>
    </source>
</evidence>
<evidence type="ECO:0000305" key="2"/>
<accession>Q06RA0</accession>
<organism>
    <name type="scientific">Jasminum nudiflorum</name>
    <name type="common">Winter jasmine</name>
    <dbReference type="NCBI Taxonomy" id="126431"/>
    <lineage>
        <taxon>Eukaryota</taxon>
        <taxon>Viridiplantae</taxon>
        <taxon>Streptophyta</taxon>
        <taxon>Embryophyta</taxon>
        <taxon>Tracheophyta</taxon>
        <taxon>Spermatophyta</taxon>
        <taxon>Magnoliopsida</taxon>
        <taxon>eudicotyledons</taxon>
        <taxon>Gunneridae</taxon>
        <taxon>Pentapetalae</taxon>
        <taxon>asterids</taxon>
        <taxon>lamiids</taxon>
        <taxon>Lamiales</taxon>
        <taxon>Oleaceae</taxon>
        <taxon>Jasmineae</taxon>
        <taxon>Jasminum</taxon>
    </lineage>
</organism>
<geneLocation type="chloroplast"/>
<proteinExistence type="inferred from homology"/>
<reference key="1">
    <citation type="journal article" date="2007" name="Mol. Biol. Evol.">
        <title>Gene relocations within chloroplast genomes of Jasminum and Menodora (Oleaceae) are due to multiple, overlapping inversions.</title>
        <authorList>
            <person name="Lee H.-L."/>
            <person name="Jansen R.K."/>
            <person name="Chumley T.W."/>
            <person name="Kim K.-J."/>
        </authorList>
    </citation>
    <scope>NUCLEOTIDE SEQUENCE [LARGE SCALE GENOMIC DNA]</scope>
</reference>
<keyword id="KW-0150">Chloroplast</keyword>
<keyword id="KW-0240">DNA-directed RNA polymerase</keyword>
<keyword id="KW-0548">Nucleotidyltransferase</keyword>
<keyword id="KW-0934">Plastid</keyword>
<keyword id="KW-0804">Transcription</keyword>
<keyword id="KW-0808">Transferase</keyword>
<comment type="function">
    <text evidence="1">DNA-dependent RNA polymerase catalyzes the transcription of DNA into RNA using the four ribonucleoside triphosphates as substrates.</text>
</comment>
<comment type="catalytic activity">
    <reaction evidence="1">
        <text>RNA(n) + a ribonucleoside 5'-triphosphate = RNA(n+1) + diphosphate</text>
        <dbReference type="Rhea" id="RHEA:21248"/>
        <dbReference type="Rhea" id="RHEA-COMP:14527"/>
        <dbReference type="Rhea" id="RHEA-COMP:17342"/>
        <dbReference type="ChEBI" id="CHEBI:33019"/>
        <dbReference type="ChEBI" id="CHEBI:61557"/>
        <dbReference type="ChEBI" id="CHEBI:140395"/>
        <dbReference type="EC" id="2.7.7.6"/>
    </reaction>
</comment>
<comment type="subunit">
    <text evidence="1">In plastids the minimal PEP RNA polymerase catalytic core is composed of four subunits: alpha, beta, beta', and beta''. When a (nuclear-encoded) sigma factor is associated with the core the holoenzyme is formed, which can initiate transcription.</text>
</comment>
<comment type="subcellular location">
    <subcellularLocation>
        <location>Plastid</location>
        <location>Chloroplast</location>
    </subcellularLocation>
</comment>
<comment type="domain">
    <text evidence="1">The N-terminal domain is essential for RNAP assembly and basal transcription, whereas the C-terminal domain is involved in interaction with transcriptional regulators and with upstream promoter elements.</text>
</comment>
<comment type="similarity">
    <text evidence="1">Belongs to the RNA polymerase alpha chain family.</text>
</comment>
<comment type="sequence caution" evidence="2">
    <conflict type="frameshift">
        <sequence resource="EMBL-CDS" id="ABG74658"/>
    </conflict>
</comment>
<sequence length="355" mass="40973">MVREKVRVSTRTLQWKCVESREDSKRLYYGRFILSPLRKGQADTIAIGIRRALLGEIEGTCITRVKSKNVPHEYSTIAGIQESVHEILMNFKEIVLRSNLYGTCDASICVRGPGYVTAQDIILPPYVEIVDNTQHIASLTEPIDLCIGLQIERNRGYLMKMPHNSQDGSYPIDAVFMPVRNANHSIHSYGSGNEKHEILFLEIWTNGSLTPKEALHEACRNLIDLFIPFLHKEEETSPLEDNHHTVPLSPLTFHDKADKLRKRKKEIKKKIALKSIFIDQSELPKVYNCLKGSNLYTLLDLLNKSQEDLMKMEHLRLEDVNHILVILARKHFAIYLPNKKFEIDFEIYCYSIFFH</sequence>
<feature type="chain" id="PRO_0000296894" description="DNA-directed RNA polymerase subunit alpha">
    <location>
        <begin position="1"/>
        <end position="355"/>
    </location>
</feature>
<feature type="region of interest" description="Alpha N-terminal domain (alpha-NTD)" evidence="1">
    <location>
        <begin position="1"/>
        <end position="233"/>
    </location>
</feature>
<feature type="region of interest" description="Alpha C-terminal domain (alpha-CTD)" evidence="1">
    <location>
        <begin position="268"/>
        <end position="355"/>
    </location>
</feature>
<protein>
    <recommendedName>
        <fullName evidence="1">DNA-directed RNA polymerase subunit alpha</fullName>
        <shortName evidence="1">PEP</shortName>
        <ecNumber evidence="1">2.7.7.6</ecNumber>
    </recommendedName>
    <alternativeName>
        <fullName evidence="1">Plastid-encoded RNA polymerase subunit alpha</fullName>
        <shortName evidence="1">RNA polymerase subunit alpha</shortName>
    </alternativeName>
</protein>
<name>RPOA_JASNU</name>
<gene>
    <name evidence="1" type="primary">rpoA</name>
    <name type="ORF">JNC0865</name>
</gene>